<keyword id="KW-0131">Cell cycle</keyword>
<keyword id="KW-0132">Cell division</keyword>
<keyword id="KW-0997">Cell inner membrane</keyword>
<keyword id="KW-1003">Cell membrane</keyword>
<keyword id="KW-0133">Cell shape</keyword>
<keyword id="KW-0961">Cell wall biogenesis/degradation</keyword>
<keyword id="KW-0328">Glycosyltransferase</keyword>
<keyword id="KW-0472">Membrane</keyword>
<keyword id="KW-0573">Peptidoglycan synthesis</keyword>
<keyword id="KW-1185">Reference proteome</keyword>
<keyword id="KW-0808">Transferase</keyword>
<keyword id="KW-0812">Transmembrane</keyword>
<keyword id="KW-1133">Transmembrane helix</keyword>
<organism>
    <name type="scientific">Borreliella burgdorferi (strain ATCC 35210 / DSM 4680 / CIP 102532 / B31)</name>
    <name type="common">Borrelia burgdorferi</name>
    <dbReference type="NCBI Taxonomy" id="224326"/>
    <lineage>
        <taxon>Bacteria</taxon>
        <taxon>Pseudomonadati</taxon>
        <taxon>Spirochaetota</taxon>
        <taxon>Spirochaetia</taxon>
        <taxon>Spirochaetales</taxon>
        <taxon>Borreliaceae</taxon>
        <taxon>Borreliella</taxon>
    </lineage>
</organism>
<dbReference type="EC" id="2.4.99.28" evidence="3"/>
<dbReference type="EMBL" id="U43739">
    <property type="protein sequence ID" value="AAA85625.1"/>
    <property type="molecule type" value="Genomic_DNA"/>
</dbReference>
<dbReference type="EMBL" id="X96685">
    <property type="protein sequence ID" value="CAA65461.1"/>
    <property type="molecule type" value="Genomic_DNA"/>
</dbReference>
<dbReference type="EMBL" id="X96433">
    <property type="protein sequence ID" value="CAA65294.1"/>
    <property type="molecule type" value="Genomic_DNA"/>
</dbReference>
<dbReference type="EMBL" id="AE000783">
    <property type="protein sequence ID" value="AAC66646.2"/>
    <property type="status" value="ALT_INIT"/>
    <property type="molecule type" value="Genomic_DNA"/>
</dbReference>
<dbReference type="PIR" id="F70137">
    <property type="entry name" value="F70137"/>
</dbReference>
<dbReference type="RefSeq" id="NP_212436.2">
    <property type="nucleotide sequence ID" value="NC_001318.1"/>
</dbReference>
<dbReference type="SMR" id="Q44775"/>
<dbReference type="STRING" id="224326.BB_0302"/>
<dbReference type="PaxDb" id="224326-BB_0302"/>
<dbReference type="EnsemblBacteria" id="AAC66646">
    <property type="protein sequence ID" value="AAC66646"/>
    <property type="gene ID" value="BB_0302"/>
</dbReference>
<dbReference type="KEGG" id="bbu:BB_0302"/>
<dbReference type="PATRIC" id="fig|224326.49.peg.701"/>
<dbReference type="HOGENOM" id="CLU_029243_1_2_12"/>
<dbReference type="OrthoDB" id="9768187at2"/>
<dbReference type="UniPathway" id="UPA00219"/>
<dbReference type="Proteomes" id="UP000001807">
    <property type="component" value="Chromosome"/>
</dbReference>
<dbReference type="GO" id="GO:0032153">
    <property type="term" value="C:cell division site"/>
    <property type="evidence" value="ECO:0007669"/>
    <property type="project" value="TreeGrafter"/>
</dbReference>
<dbReference type="GO" id="GO:0005886">
    <property type="term" value="C:plasma membrane"/>
    <property type="evidence" value="ECO:0007669"/>
    <property type="project" value="UniProtKB-SubCell"/>
</dbReference>
<dbReference type="GO" id="GO:0015648">
    <property type="term" value="F:lipid-linked peptidoglycan transporter activity"/>
    <property type="evidence" value="ECO:0007669"/>
    <property type="project" value="TreeGrafter"/>
</dbReference>
<dbReference type="GO" id="GO:0008955">
    <property type="term" value="F:peptidoglycan glycosyltransferase activity"/>
    <property type="evidence" value="ECO:0007669"/>
    <property type="project" value="RHEA"/>
</dbReference>
<dbReference type="GO" id="GO:0051301">
    <property type="term" value="P:cell division"/>
    <property type="evidence" value="ECO:0007669"/>
    <property type="project" value="UniProtKB-KW"/>
</dbReference>
<dbReference type="GO" id="GO:0071555">
    <property type="term" value="P:cell wall organization"/>
    <property type="evidence" value="ECO:0007669"/>
    <property type="project" value="UniProtKB-KW"/>
</dbReference>
<dbReference type="GO" id="GO:0009252">
    <property type="term" value="P:peptidoglycan biosynthetic process"/>
    <property type="evidence" value="ECO:0007669"/>
    <property type="project" value="UniProtKB-UniPathway"/>
</dbReference>
<dbReference type="GO" id="GO:0008360">
    <property type="term" value="P:regulation of cell shape"/>
    <property type="evidence" value="ECO:0007669"/>
    <property type="project" value="UniProtKB-KW"/>
</dbReference>
<dbReference type="InterPro" id="IPR018365">
    <property type="entry name" value="Cell_cycle_FtsW-rel_CS"/>
</dbReference>
<dbReference type="InterPro" id="IPR013437">
    <property type="entry name" value="FtsW"/>
</dbReference>
<dbReference type="InterPro" id="IPR001182">
    <property type="entry name" value="FtsW/RodA"/>
</dbReference>
<dbReference type="NCBIfam" id="TIGR02614">
    <property type="entry name" value="ftsW"/>
    <property type="match status" value="1"/>
</dbReference>
<dbReference type="PANTHER" id="PTHR30474">
    <property type="entry name" value="CELL CYCLE PROTEIN"/>
    <property type="match status" value="1"/>
</dbReference>
<dbReference type="PANTHER" id="PTHR30474:SF2">
    <property type="entry name" value="PEPTIDOGLYCAN GLYCOSYLTRANSFERASE FTSW-RELATED"/>
    <property type="match status" value="1"/>
</dbReference>
<dbReference type="Pfam" id="PF01098">
    <property type="entry name" value="FTSW_RODA_SPOVE"/>
    <property type="match status" value="1"/>
</dbReference>
<dbReference type="PROSITE" id="PS00428">
    <property type="entry name" value="FTSW_RODA_SPOVE"/>
    <property type="match status" value="1"/>
</dbReference>
<evidence type="ECO:0000250" key="1"/>
<evidence type="ECO:0000250" key="2">
    <source>
        <dbReference type="UniProtKB" id="O07639"/>
    </source>
</evidence>
<evidence type="ECO:0000250" key="3">
    <source>
        <dbReference type="UniProtKB" id="P39604"/>
    </source>
</evidence>
<evidence type="ECO:0000255" key="4"/>
<evidence type="ECO:0000305" key="5"/>
<protein>
    <recommendedName>
        <fullName evidence="3">Probable peptidoglycan glycosyltransferase FtsW</fullName>
        <shortName evidence="3">PGT</shortName>
        <ecNumber evidence="3">2.4.99.28</ecNumber>
    </recommendedName>
    <alternativeName>
        <fullName evidence="2">Cell division protein FtsW</fullName>
    </alternativeName>
    <alternativeName>
        <fullName evidence="3">Cell wall polymerase</fullName>
    </alternativeName>
    <alternativeName>
        <fullName evidence="3">Peptidoglycan polymerase</fullName>
        <shortName evidence="3">PG polymerase</shortName>
    </alternativeName>
</protein>
<reference key="1">
    <citation type="submission" date="1995-12" db="EMBL/GenBank/DDBJ databases">
        <authorList>
            <person name="Dunn J.J."/>
            <person name="Butler-Loffredo L."/>
            <person name="Kieleczawa J."/>
            <person name="Medalle J."/>
            <person name="Luft B.J."/>
        </authorList>
    </citation>
    <scope>NUCLEOTIDE SEQUENCE [GENOMIC DNA]</scope>
    <source>
        <strain>ATCC 35210 / DSM 4680 / CIP 102532 / B31</strain>
    </source>
</reference>
<reference key="2">
    <citation type="submission" date="1996-03" db="EMBL/GenBank/DDBJ databases">
        <authorList>
            <person name="Ge Y."/>
            <person name="Old I.G."/>
            <person name="Saint Girons I."/>
            <person name="Charon N.W."/>
        </authorList>
    </citation>
    <scope>NUCLEOTIDE SEQUENCE [GENOMIC DNA]</scope>
    <source>
        <strain>212</strain>
    </source>
</reference>
<reference key="3">
    <citation type="journal article" date="1997" name="Nature">
        <title>Genomic sequence of a Lyme disease spirochaete, Borrelia burgdorferi.</title>
        <authorList>
            <person name="Fraser C.M."/>
            <person name="Casjens S."/>
            <person name="Huang W.M."/>
            <person name="Sutton G.G."/>
            <person name="Clayton R.A."/>
            <person name="Lathigra R."/>
            <person name="White O."/>
            <person name="Ketchum K.A."/>
            <person name="Dodson R.J."/>
            <person name="Hickey E.K."/>
            <person name="Gwinn M.L."/>
            <person name="Dougherty B.A."/>
            <person name="Tomb J.-F."/>
            <person name="Fleischmann R.D."/>
            <person name="Richardson D.L."/>
            <person name="Peterson J.D."/>
            <person name="Kerlavage A.R."/>
            <person name="Quackenbush J."/>
            <person name="Salzberg S.L."/>
            <person name="Hanson M."/>
            <person name="van Vugt R."/>
            <person name="Palmer N."/>
            <person name="Adams M.D."/>
            <person name="Gocayne J.D."/>
            <person name="Weidman J.F."/>
            <person name="Utterback T.R."/>
            <person name="Watthey L."/>
            <person name="McDonald L.A."/>
            <person name="Artiach P."/>
            <person name="Bowman C."/>
            <person name="Garland S.A."/>
            <person name="Fujii C."/>
            <person name="Cotton M.D."/>
            <person name="Horst K."/>
            <person name="Roberts K.M."/>
            <person name="Hatch B."/>
            <person name="Smith H.O."/>
            <person name="Venter J.C."/>
        </authorList>
    </citation>
    <scope>NUCLEOTIDE SEQUENCE [LARGE SCALE GENOMIC DNA]</scope>
    <source>
        <strain>ATCC 35210 / DSM 4680 / CIP 102532 / B31</strain>
    </source>
</reference>
<proteinExistence type="inferred from homology"/>
<gene>
    <name type="primary">ftsW</name>
    <name type="ordered locus">BB_0302</name>
</gene>
<sequence length="364" mass="40950">MVVEINSLRTCYLLVLLLLVAYGLVVFYTSSFFLSLELTGNPNFLFFTRLNYLFLSFMVFLVFERISLNFLKKSIFPVLIITLFLIMATFLSPSISGAKRWIFFQGVSIQPSEIFKISFTIYLSAYLSKFDPRKNNGISYWIKPMLIFAIFWVLIILQNDYSTAIYFAILFFIVLFVSNMAFSYVFAIVVTFLPVSAIFLMLEPYRVSRIFAFLNPYDDPSGKGYQIIASLNALKSGGILGKGLGMGEVKLGKLPEANSDFIFSVLGEELGFLGVLFAISLFFLFFYFGYFIAIHSNSRFKFFIAFISSLAIFLQSMMNILIAIGLLPPTGINLPFFSSGGSSIIVTMALSGLISNVSKNLSNN</sequence>
<feature type="chain" id="PRO_0000062696" description="Probable peptidoglycan glycosyltransferase FtsW">
    <location>
        <begin position="1"/>
        <end position="364"/>
    </location>
</feature>
<feature type="topological domain" description="Cytoplasmic" evidence="4">
    <location>
        <begin position="1"/>
        <end position="12"/>
    </location>
</feature>
<feature type="transmembrane region" description="Helical" evidence="4">
    <location>
        <begin position="13"/>
        <end position="33"/>
    </location>
</feature>
<feature type="topological domain" description="Periplasmic" evidence="4">
    <location>
        <begin position="34"/>
        <end position="43"/>
    </location>
</feature>
<feature type="transmembrane region" description="Helical" evidence="4">
    <location>
        <begin position="44"/>
        <end position="64"/>
    </location>
</feature>
<feature type="topological domain" description="Cytoplasmic" evidence="4">
    <location>
        <begin position="65"/>
        <end position="74"/>
    </location>
</feature>
<feature type="transmembrane region" description="Helical" evidence="4">
    <location>
        <begin position="75"/>
        <end position="95"/>
    </location>
</feature>
<feature type="topological domain" description="Periplasmic" evidence="4">
    <location>
        <begin position="96"/>
        <end position="100"/>
    </location>
</feature>
<feature type="transmembrane region" description="Helical" evidence="4">
    <location>
        <begin position="101"/>
        <end position="121"/>
    </location>
</feature>
<feature type="topological domain" description="Cytoplasmic" evidence="4">
    <location>
        <begin position="122"/>
        <end position="136"/>
    </location>
</feature>
<feature type="transmembrane region" description="Helical" evidence="4">
    <location>
        <begin position="137"/>
        <end position="157"/>
    </location>
</feature>
<feature type="topological domain" description="Periplasmic" evidence="4">
    <location>
        <begin position="158"/>
        <end position="160"/>
    </location>
</feature>
<feature type="transmembrane region" description="Helical" evidence="4">
    <location>
        <begin position="161"/>
        <end position="178"/>
    </location>
</feature>
<feature type="topological domain" description="Cytoplasmic" evidence="4">
    <location>
        <position position="179"/>
    </location>
</feature>
<feature type="transmembrane region" description="Helical" evidence="4">
    <location>
        <begin position="180"/>
        <end position="202"/>
    </location>
</feature>
<feature type="topological domain" description="Periplasmic" evidence="4">
    <location>
        <begin position="203"/>
        <end position="271"/>
    </location>
</feature>
<feature type="transmembrane region" description="Helical" evidence="4">
    <location>
        <begin position="272"/>
        <end position="292"/>
    </location>
</feature>
<feature type="topological domain" description="Cytoplasmic" evidence="4">
    <location>
        <begin position="293"/>
        <end position="301"/>
    </location>
</feature>
<feature type="transmembrane region" description="Helical" evidence="4">
    <location>
        <begin position="302"/>
        <end position="322"/>
    </location>
</feature>
<feature type="topological domain" description="Periplasmic" evidence="4">
    <location>
        <begin position="323"/>
        <end position="333"/>
    </location>
</feature>
<feature type="transmembrane region" description="Helical" evidence="4">
    <location>
        <begin position="334"/>
        <end position="354"/>
    </location>
</feature>
<feature type="topological domain" description="Cytoplasmic" evidence="4">
    <location>
        <begin position="355"/>
        <end position="364"/>
    </location>
</feature>
<feature type="sequence conflict" description="In Ref. 2; CAA65461." evidence="5" ref="2">
    <original>A</original>
    <variation>P</variation>
    <location>
        <position position="98"/>
    </location>
</feature>
<name>FTSW_BORBU</name>
<comment type="function">
    <text evidence="3">Peptidoglycan polymerase that is essential for cell division.</text>
</comment>
<comment type="catalytic activity">
    <reaction evidence="3">
        <text>[GlcNAc-(1-&gt;4)-Mur2Ac(oyl-L-Ala-gamma-D-Glu-L-Lys-D-Ala-D-Ala)](n)-di-trans,octa-cis-undecaprenyl diphosphate + beta-D-GlcNAc-(1-&gt;4)-Mur2Ac(oyl-L-Ala-gamma-D-Glu-L-Lys-D-Ala-D-Ala)-di-trans,octa-cis-undecaprenyl diphosphate = [GlcNAc-(1-&gt;4)-Mur2Ac(oyl-L-Ala-gamma-D-Glu-L-Lys-D-Ala-D-Ala)](n+1)-di-trans,octa-cis-undecaprenyl diphosphate + di-trans,octa-cis-undecaprenyl diphosphate + H(+)</text>
        <dbReference type="Rhea" id="RHEA:23708"/>
        <dbReference type="Rhea" id="RHEA-COMP:9602"/>
        <dbReference type="Rhea" id="RHEA-COMP:9603"/>
        <dbReference type="ChEBI" id="CHEBI:15378"/>
        <dbReference type="ChEBI" id="CHEBI:58405"/>
        <dbReference type="ChEBI" id="CHEBI:60033"/>
        <dbReference type="ChEBI" id="CHEBI:78435"/>
        <dbReference type="EC" id="2.4.99.28"/>
    </reaction>
</comment>
<comment type="pathway">
    <text evidence="3">Cell wall biogenesis; peptidoglycan biosynthesis.</text>
</comment>
<comment type="subcellular location">
    <subcellularLocation>
        <location evidence="1">Cell inner membrane</location>
        <topology evidence="4">Multi-pass membrane protein</topology>
    </subcellularLocation>
    <text evidence="1">Localizes to the division septum.</text>
</comment>
<comment type="similarity">
    <text evidence="5">Belongs to the SEDS family. FtsW subfamily.</text>
</comment>
<comment type="sequence caution" evidence="5">
    <conflict type="erroneous initiation">
        <sequence resource="EMBL-CDS" id="AAC66646"/>
    </conflict>
    <text>Truncated N-terminus.</text>
</comment>
<accession>Q44775</accession>
<accession>Q44874</accession>
<accession>Q44922</accession>